<protein>
    <recommendedName>
        <fullName>Accessory gland-specific peptide 57Dc</fullName>
    </recommendedName>
    <alternativeName>
        <fullName>45 kDa cAMP-dependent phosphoprotein</fullName>
    </alternativeName>
    <alternativeName>
        <fullName>Male accessory gland secretory protein 57Dc</fullName>
    </alternativeName>
    <alternativeName>
        <fullName>Pp45</fullName>
    </alternativeName>
</protein>
<keyword id="KW-0085">Behavior</keyword>
<keyword id="KW-0903">Direct protein sequencing</keyword>
<keyword id="KW-0597">Phosphoprotein</keyword>
<keyword id="KW-1185">Reference proteome</keyword>
<keyword id="KW-0964">Secreted</keyword>
<keyword id="KW-0732">Signal</keyword>
<reference evidence="4" key="1">
    <citation type="journal article" date="1999" name="Insect Biochem. Mol. Biol.">
        <title>A 45-kDa cAMP-dependent phosphoprotein which is related to the product of Mst57Dc in Drosophila melanogaster.</title>
        <authorList>
            <person name="Cho K.S."/>
            <person name="Lim J.H."/>
            <person name="Won D.H."/>
            <person name="Gye M.C."/>
            <person name="Chung K.W."/>
            <person name="Lee C.C."/>
        </authorList>
    </citation>
    <scope>NUCLEOTIDE SEQUENCE [MRNA]</scope>
    <scope>PROTEIN SEQUENCE OF 25-40</scope>
    <scope>SUBCELLULAR LOCATION</scope>
    <scope>TISSUE SPECIFICITY</scope>
    <scope>DEVELOPMENTAL STAGE</scope>
    <scope>PHOSPHORYLATION</scope>
    <source>
        <tissue>Male accessory gland</tissue>
    </source>
</reference>
<reference evidence="4" key="2">
    <citation type="journal article" date="1995" name="Insect Biochem. Mol. Biol.">
        <title>Structure and regulation of a gene cluster for male accessory gland transcripts in Drosophila melanogaster.</title>
        <authorList>
            <person name="Simmerl E."/>
            <person name="Schaefer M."/>
            <person name="Schaefer U."/>
        </authorList>
    </citation>
    <scope>NUCLEOTIDE SEQUENCE [GENOMIC DNA]</scope>
    <scope>TISSUE SPECIFICITY</scope>
    <source>
        <strain>Oregon-R</strain>
        <tissue>Male accessory gland</tissue>
    </source>
</reference>
<reference evidence="5" key="3">
    <citation type="journal article" date="2005" name="Genetics">
        <title>Cross-species comparison of Drosophila male accessory gland protein genes.</title>
        <authorList>
            <person name="Mueller J.L."/>
            <person name="Ravi Ram K."/>
            <person name="McGraw L.A."/>
            <person name="Bloch Qazi M.C."/>
            <person name="Siggia E.D."/>
            <person name="Clark A.G."/>
            <person name="Aquadro C.F."/>
            <person name="Wolfner M.F."/>
        </authorList>
    </citation>
    <scope>NUCLEOTIDE SEQUENCE [MRNA]</scope>
    <source>
        <strain evidence="5">Canton-S</strain>
    </source>
</reference>
<reference evidence="4" key="4">
    <citation type="journal article" date="2000" name="Science">
        <title>The genome sequence of Drosophila melanogaster.</title>
        <authorList>
            <person name="Adams M.D."/>
            <person name="Celniker S.E."/>
            <person name="Holt R.A."/>
            <person name="Evans C.A."/>
            <person name="Gocayne J.D."/>
            <person name="Amanatides P.G."/>
            <person name="Scherer S.E."/>
            <person name="Li P.W."/>
            <person name="Hoskins R.A."/>
            <person name="Galle R.F."/>
            <person name="George R.A."/>
            <person name="Lewis S.E."/>
            <person name="Richards S."/>
            <person name="Ashburner M."/>
            <person name="Henderson S.N."/>
            <person name="Sutton G.G."/>
            <person name="Wortman J.R."/>
            <person name="Yandell M.D."/>
            <person name="Zhang Q."/>
            <person name="Chen L.X."/>
            <person name="Brandon R.C."/>
            <person name="Rogers Y.-H.C."/>
            <person name="Blazej R.G."/>
            <person name="Champe M."/>
            <person name="Pfeiffer B.D."/>
            <person name="Wan K.H."/>
            <person name="Doyle C."/>
            <person name="Baxter E.G."/>
            <person name="Helt G."/>
            <person name="Nelson C.R."/>
            <person name="Miklos G.L.G."/>
            <person name="Abril J.F."/>
            <person name="Agbayani A."/>
            <person name="An H.-J."/>
            <person name="Andrews-Pfannkoch C."/>
            <person name="Baldwin D."/>
            <person name="Ballew R.M."/>
            <person name="Basu A."/>
            <person name="Baxendale J."/>
            <person name="Bayraktaroglu L."/>
            <person name="Beasley E.M."/>
            <person name="Beeson K.Y."/>
            <person name="Benos P.V."/>
            <person name="Berman B.P."/>
            <person name="Bhandari D."/>
            <person name="Bolshakov S."/>
            <person name="Borkova D."/>
            <person name="Botchan M.R."/>
            <person name="Bouck J."/>
            <person name="Brokstein P."/>
            <person name="Brottier P."/>
            <person name="Burtis K.C."/>
            <person name="Busam D.A."/>
            <person name="Butler H."/>
            <person name="Cadieu E."/>
            <person name="Center A."/>
            <person name="Chandra I."/>
            <person name="Cherry J.M."/>
            <person name="Cawley S."/>
            <person name="Dahlke C."/>
            <person name="Davenport L.B."/>
            <person name="Davies P."/>
            <person name="de Pablos B."/>
            <person name="Delcher A."/>
            <person name="Deng Z."/>
            <person name="Mays A.D."/>
            <person name="Dew I."/>
            <person name="Dietz S.M."/>
            <person name="Dodson K."/>
            <person name="Doup L.E."/>
            <person name="Downes M."/>
            <person name="Dugan-Rocha S."/>
            <person name="Dunkov B.C."/>
            <person name="Dunn P."/>
            <person name="Durbin K.J."/>
            <person name="Evangelista C.C."/>
            <person name="Ferraz C."/>
            <person name="Ferriera S."/>
            <person name="Fleischmann W."/>
            <person name="Fosler C."/>
            <person name="Gabrielian A.E."/>
            <person name="Garg N.S."/>
            <person name="Gelbart W.M."/>
            <person name="Glasser K."/>
            <person name="Glodek A."/>
            <person name="Gong F."/>
            <person name="Gorrell J.H."/>
            <person name="Gu Z."/>
            <person name="Guan P."/>
            <person name="Harris M."/>
            <person name="Harris N.L."/>
            <person name="Harvey D.A."/>
            <person name="Heiman T.J."/>
            <person name="Hernandez J.R."/>
            <person name="Houck J."/>
            <person name="Hostin D."/>
            <person name="Houston K.A."/>
            <person name="Howland T.J."/>
            <person name="Wei M.-H."/>
            <person name="Ibegwam C."/>
            <person name="Jalali M."/>
            <person name="Kalush F."/>
            <person name="Karpen G.H."/>
            <person name="Ke Z."/>
            <person name="Kennison J.A."/>
            <person name="Ketchum K.A."/>
            <person name="Kimmel B.E."/>
            <person name="Kodira C.D."/>
            <person name="Kraft C.L."/>
            <person name="Kravitz S."/>
            <person name="Kulp D."/>
            <person name="Lai Z."/>
            <person name="Lasko P."/>
            <person name="Lei Y."/>
            <person name="Levitsky A.A."/>
            <person name="Li J.H."/>
            <person name="Li Z."/>
            <person name="Liang Y."/>
            <person name="Lin X."/>
            <person name="Liu X."/>
            <person name="Mattei B."/>
            <person name="McIntosh T.C."/>
            <person name="McLeod M.P."/>
            <person name="McPherson D."/>
            <person name="Merkulov G."/>
            <person name="Milshina N.V."/>
            <person name="Mobarry C."/>
            <person name="Morris J."/>
            <person name="Moshrefi A."/>
            <person name="Mount S.M."/>
            <person name="Moy M."/>
            <person name="Murphy B."/>
            <person name="Murphy L."/>
            <person name="Muzny D.M."/>
            <person name="Nelson D.L."/>
            <person name="Nelson D.R."/>
            <person name="Nelson K.A."/>
            <person name="Nixon K."/>
            <person name="Nusskern D.R."/>
            <person name="Pacleb J.M."/>
            <person name="Palazzolo M."/>
            <person name="Pittman G.S."/>
            <person name="Pan S."/>
            <person name="Pollard J."/>
            <person name="Puri V."/>
            <person name="Reese M.G."/>
            <person name="Reinert K."/>
            <person name="Remington K."/>
            <person name="Saunders R.D.C."/>
            <person name="Scheeler F."/>
            <person name="Shen H."/>
            <person name="Shue B.C."/>
            <person name="Siden-Kiamos I."/>
            <person name="Simpson M."/>
            <person name="Skupski M.P."/>
            <person name="Smith T.J."/>
            <person name="Spier E."/>
            <person name="Spradling A.C."/>
            <person name="Stapleton M."/>
            <person name="Strong R."/>
            <person name="Sun E."/>
            <person name="Svirskas R."/>
            <person name="Tector C."/>
            <person name="Turner R."/>
            <person name="Venter E."/>
            <person name="Wang A.H."/>
            <person name="Wang X."/>
            <person name="Wang Z.-Y."/>
            <person name="Wassarman D.A."/>
            <person name="Weinstock G.M."/>
            <person name="Weissenbach J."/>
            <person name="Williams S.M."/>
            <person name="Woodage T."/>
            <person name="Worley K.C."/>
            <person name="Wu D."/>
            <person name="Yang S."/>
            <person name="Yao Q.A."/>
            <person name="Ye J."/>
            <person name="Yeh R.-F."/>
            <person name="Zaveri J.S."/>
            <person name="Zhan M."/>
            <person name="Zhang G."/>
            <person name="Zhao Q."/>
            <person name="Zheng L."/>
            <person name="Zheng X.H."/>
            <person name="Zhong F.N."/>
            <person name="Zhong W."/>
            <person name="Zhou X."/>
            <person name="Zhu S.C."/>
            <person name="Zhu X."/>
            <person name="Smith H.O."/>
            <person name="Gibbs R.A."/>
            <person name="Myers E.W."/>
            <person name="Rubin G.M."/>
            <person name="Venter J.C."/>
        </authorList>
    </citation>
    <scope>NUCLEOTIDE SEQUENCE [LARGE SCALE GENOMIC DNA]</scope>
    <source>
        <strain>Berkeley</strain>
    </source>
</reference>
<reference key="5">
    <citation type="journal article" date="2002" name="Genome Biol.">
        <title>Annotation of the Drosophila melanogaster euchromatic genome: a systematic review.</title>
        <authorList>
            <person name="Misra S."/>
            <person name="Crosby M.A."/>
            <person name="Mungall C.J."/>
            <person name="Matthews B.B."/>
            <person name="Campbell K.S."/>
            <person name="Hradecky P."/>
            <person name="Huang Y."/>
            <person name="Kaminker J.S."/>
            <person name="Millburn G.H."/>
            <person name="Prochnik S.E."/>
            <person name="Smith C.D."/>
            <person name="Tupy J.L."/>
            <person name="Whitfield E.J."/>
            <person name="Bayraktaroglu L."/>
            <person name="Berman B.P."/>
            <person name="Bettencourt B.R."/>
            <person name="Celniker S.E."/>
            <person name="de Grey A.D.N.J."/>
            <person name="Drysdale R.A."/>
            <person name="Harris N.L."/>
            <person name="Richter J."/>
            <person name="Russo S."/>
            <person name="Schroeder A.J."/>
            <person name="Shu S.Q."/>
            <person name="Stapleton M."/>
            <person name="Yamada C."/>
            <person name="Ashburner M."/>
            <person name="Gelbart W.M."/>
            <person name="Rubin G.M."/>
            <person name="Lewis S.E."/>
        </authorList>
    </citation>
    <scope>GENOME REANNOTATION</scope>
    <source>
        <strain>Berkeley</strain>
    </source>
</reference>
<dbReference type="EMBL" id="AF142325">
    <property type="protein sequence ID" value="AAD33884.1"/>
    <property type="status" value="ALT_INIT"/>
    <property type="molecule type" value="mRNA"/>
</dbReference>
<dbReference type="EMBL" id="Z33647">
    <property type="protein sequence ID" value="CAA83927.1"/>
    <property type="status" value="ALT_FRAME"/>
    <property type="molecule type" value="Genomic_DNA"/>
</dbReference>
<dbReference type="EMBL" id="DQ231598">
    <property type="protein sequence ID" value="ABA71704.1"/>
    <property type="molecule type" value="mRNA"/>
</dbReference>
<dbReference type="EMBL" id="AE014297">
    <property type="protein sequence ID" value="AAF56513.1"/>
    <property type="molecule type" value="Genomic_DNA"/>
</dbReference>
<dbReference type="RefSeq" id="NP_524498.2">
    <property type="nucleotide sequence ID" value="NM_079774.4"/>
</dbReference>
<dbReference type="STRING" id="7227.FBpp0308307"/>
<dbReference type="PaxDb" id="7227-FBpp0084290"/>
<dbReference type="EnsemblMetazoa" id="FBtr0339163">
    <property type="protein sequence ID" value="FBpp0308307"/>
    <property type="gene ID" value="FBgn0011670"/>
</dbReference>
<dbReference type="GeneID" id="43121"/>
<dbReference type="KEGG" id="dme:Dmel_CG4986"/>
<dbReference type="AGR" id="FB:FBgn0011670"/>
<dbReference type="CTD" id="43121"/>
<dbReference type="FlyBase" id="FBgn0011670">
    <property type="gene designation" value="Mst57Dc"/>
</dbReference>
<dbReference type="VEuPathDB" id="VectorBase:FBgn0011670"/>
<dbReference type="HOGENOM" id="CLU_180286_0_0_1"/>
<dbReference type="InParanoid" id="Q9V3J3"/>
<dbReference type="OMA" id="VENWKPE"/>
<dbReference type="OrthoDB" id="10369707at2759"/>
<dbReference type="PhylomeDB" id="Q9V3J3"/>
<dbReference type="BioGRID-ORCS" id="43121">
    <property type="hits" value="0 hits in 1 CRISPR screen"/>
</dbReference>
<dbReference type="GenomeRNAi" id="43121"/>
<dbReference type="PRO" id="PR:Q9V3J3"/>
<dbReference type="Proteomes" id="UP000000803">
    <property type="component" value="Chromosome 3R"/>
</dbReference>
<dbReference type="Bgee" id="FBgn0011670">
    <property type="expression patterns" value="Expressed in spermatid in male reproductive gland and 49 other cell types or tissues"/>
</dbReference>
<dbReference type="GO" id="GO:0005576">
    <property type="term" value="C:extracellular region"/>
    <property type="evidence" value="ECO:0000303"/>
    <property type="project" value="UniProtKB"/>
</dbReference>
<dbReference type="GO" id="GO:0005615">
    <property type="term" value="C:extracellular space"/>
    <property type="evidence" value="ECO:0007005"/>
    <property type="project" value="FlyBase"/>
</dbReference>
<dbReference type="GO" id="GO:0018991">
    <property type="term" value="P:egg-laying behavior"/>
    <property type="evidence" value="ECO:0000303"/>
    <property type="project" value="UniProtKB"/>
</dbReference>
<dbReference type="GO" id="GO:0045924">
    <property type="term" value="P:regulation of female receptivity"/>
    <property type="evidence" value="ECO:0000303"/>
    <property type="project" value="UniProtKB"/>
</dbReference>
<dbReference type="GO" id="GO:0019953">
    <property type="term" value="P:sexual reproduction"/>
    <property type="evidence" value="ECO:0007007"/>
    <property type="project" value="FlyBase"/>
</dbReference>
<evidence type="ECO:0000255" key="1"/>
<evidence type="ECO:0000269" key="2">
    <source>
    </source>
</evidence>
<evidence type="ECO:0000269" key="3">
    <source>
    </source>
</evidence>
<evidence type="ECO:0000305" key="4"/>
<evidence type="ECO:0000312" key="5">
    <source>
        <dbReference type="EMBL" id="ABA71704.1"/>
    </source>
</evidence>
<gene>
    <name type="primary">Mst57Dc</name>
    <name type="ORF">CG4986</name>
</gene>
<organism>
    <name type="scientific">Drosophila melanogaster</name>
    <name type="common">Fruit fly</name>
    <dbReference type="NCBI Taxonomy" id="7227"/>
    <lineage>
        <taxon>Eukaryota</taxon>
        <taxon>Metazoa</taxon>
        <taxon>Ecdysozoa</taxon>
        <taxon>Arthropoda</taxon>
        <taxon>Hexapoda</taxon>
        <taxon>Insecta</taxon>
        <taxon>Pterygota</taxon>
        <taxon>Neoptera</taxon>
        <taxon>Endopterygota</taxon>
        <taxon>Diptera</taxon>
        <taxon>Brachycera</taxon>
        <taxon>Muscomorpha</taxon>
        <taxon>Ephydroidea</taxon>
        <taxon>Drosophilidae</taxon>
        <taxon>Drosophila</taxon>
        <taxon>Sophophora</taxon>
    </lineage>
</organism>
<proteinExistence type="evidence at protein level"/>
<feature type="signal peptide" evidence="1">
    <location>
        <begin position="1"/>
        <end position="20"/>
    </location>
</feature>
<feature type="chain" id="PRO_0000021764" description="Accessory gland-specific peptide 57Dc" evidence="1">
    <location>
        <begin position="21"/>
        <end position="76"/>
    </location>
</feature>
<name>MS57C_DROME</name>
<accession>Q9V3J3</accession>
<accession>Q24392</accession>
<accession>Q3HKR0</accession>
<comment type="function">
    <text>Transferred from male to female during mating and may affect egglaying and behavior after mating.</text>
</comment>
<comment type="subcellular location">
    <subcellularLocation>
        <location evidence="2">Secreted</location>
    </subcellularLocation>
</comment>
<comment type="tissue specificity">
    <text evidence="2 3">Lumen fluid of male accessory glands, becomes seminal fluid.</text>
</comment>
<comment type="developmental stage">
    <text evidence="2">Accumulates after eclosion and gradually increases during sexual maturation. In males, levels decline immediately after mating and recover progressively.</text>
</comment>
<comment type="PTM">
    <text evidence="2">cAMP-dependent phosphorylation.</text>
</comment>
<comment type="sequence caution" evidence="4">
    <conflict type="erroneous initiation">
        <sequence resource="EMBL-CDS" id="AAD33884"/>
    </conflict>
    <text>Extended N-terminus.</text>
</comment>
<comment type="sequence caution" evidence="4">
    <conflict type="frameshift">
        <sequence resource="EMBL-CDS" id="CAA83927"/>
    </conflict>
</comment>
<sequence length="76" mass="8452">MHGTHFLILLLLCGVLGSNGVTPDIKNVAKAERNMHNMLRCLKKNEPIVKSRILTLPPNCNQYVSAVVETWKPEGV</sequence>